<organism>
    <name type="scientific">Rattus norvegicus</name>
    <name type="common">Rat</name>
    <dbReference type="NCBI Taxonomy" id="10116"/>
    <lineage>
        <taxon>Eukaryota</taxon>
        <taxon>Metazoa</taxon>
        <taxon>Chordata</taxon>
        <taxon>Craniata</taxon>
        <taxon>Vertebrata</taxon>
        <taxon>Euteleostomi</taxon>
        <taxon>Mammalia</taxon>
        <taxon>Eutheria</taxon>
        <taxon>Euarchontoglires</taxon>
        <taxon>Glires</taxon>
        <taxon>Rodentia</taxon>
        <taxon>Myomorpha</taxon>
        <taxon>Muroidea</taxon>
        <taxon>Muridae</taxon>
        <taxon>Murinae</taxon>
        <taxon>Rattus</taxon>
    </lineage>
</organism>
<dbReference type="EMBL" id="BC098755">
    <property type="protein sequence ID" value="AAH98755.1"/>
    <property type="molecule type" value="mRNA"/>
</dbReference>
<dbReference type="RefSeq" id="NP_001020859.1">
    <property type="nucleotide sequence ID" value="NM_001025688.1"/>
</dbReference>
<dbReference type="SMR" id="Q4KM62"/>
<dbReference type="FunCoup" id="Q4KM62">
    <property type="interactions" value="139"/>
</dbReference>
<dbReference type="STRING" id="10116.ENSRNOP00000070894"/>
<dbReference type="iPTMnet" id="Q4KM62"/>
<dbReference type="PhosphoSitePlus" id="Q4KM62"/>
<dbReference type="PaxDb" id="10116-ENSRNOP00000022615"/>
<dbReference type="Ensembl" id="ENSRNOT00000095854.1">
    <property type="protein sequence ID" value="ENSRNOP00000090695.1"/>
    <property type="gene ID" value="ENSRNOG00000058609.2"/>
</dbReference>
<dbReference type="GeneID" id="310811"/>
<dbReference type="KEGG" id="rno:310811"/>
<dbReference type="UCSC" id="RGD:1305624">
    <property type="organism name" value="rat"/>
</dbReference>
<dbReference type="AGR" id="RGD:1305624"/>
<dbReference type="CTD" id="54873"/>
<dbReference type="RGD" id="1305624">
    <property type="gene designation" value="Palmd"/>
</dbReference>
<dbReference type="eggNOG" id="ENOG502QVMH">
    <property type="taxonomic scope" value="Eukaryota"/>
</dbReference>
<dbReference type="GeneTree" id="ENSGT00940000157718"/>
<dbReference type="InParanoid" id="Q4KM62"/>
<dbReference type="OrthoDB" id="72201at9989"/>
<dbReference type="PhylomeDB" id="Q4KM62"/>
<dbReference type="TreeFam" id="TF105402"/>
<dbReference type="PRO" id="PR:Q4KM62"/>
<dbReference type="Proteomes" id="UP000002494">
    <property type="component" value="Chromosome 2"/>
</dbReference>
<dbReference type="GO" id="GO:0005737">
    <property type="term" value="C:cytoplasm"/>
    <property type="evidence" value="ECO:0000314"/>
    <property type="project" value="UniProtKB"/>
</dbReference>
<dbReference type="GO" id="GO:0030425">
    <property type="term" value="C:dendrite"/>
    <property type="evidence" value="ECO:0000314"/>
    <property type="project" value="UniProtKB"/>
</dbReference>
<dbReference type="GO" id="GO:0043197">
    <property type="term" value="C:dendritic spine"/>
    <property type="evidence" value="ECO:0000314"/>
    <property type="project" value="UniProtKB"/>
</dbReference>
<dbReference type="GO" id="GO:0016020">
    <property type="term" value="C:membrane"/>
    <property type="evidence" value="ECO:0007669"/>
    <property type="project" value="InterPro"/>
</dbReference>
<dbReference type="GO" id="GO:0008360">
    <property type="term" value="P:regulation of cell shape"/>
    <property type="evidence" value="ECO:0007669"/>
    <property type="project" value="InterPro"/>
</dbReference>
<dbReference type="InterPro" id="IPR004965">
    <property type="entry name" value="Paralemmin"/>
</dbReference>
<dbReference type="PANTHER" id="PTHR46881">
    <property type="entry name" value="PALMDELPHIN"/>
    <property type="match status" value="1"/>
</dbReference>
<dbReference type="PANTHER" id="PTHR46881:SF1">
    <property type="entry name" value="PALMDELPHIN"/>
    <property type="match status" value="1"/>
</dbReference>
<dbReference type="Pfam" id="PF03285">
    <property type="entry name" value="Paralemmin"/>
    <property type="match status" value="2"/>
</dbReference>
<proteinExistence type="evidence at protein level"/>
<reference key="1">
    <citation type="journal article" date="2004" name="Genome Res.">
        <title>The status, quality, and expansion of the NIH full-length cDNA project: the Mammalian Gene Collection (MGC).</title>
        <authorList>
            <consortium name="The MGC Project Team"/>
        </authorList>
    </citation>
    <scope>NUCLEOTIDE SEQUENCE [LARGE SCALE MRNA]</scope>
    <source>
        <tissue>Liver</tissue>
    </source>
</reference>
<reference key="2">
    <citation type="journal article" date="2005" name="Eur. J. Cell Biol.">
        <title>Molecular characterization and immunohistochemical localization of palmdelphin, a cytosolic isoform of the paralemmin protein family implicated in membrane dynamics.</title>
        <authorList>
            <person name="Hu B."/>
            <person name="Petrasch-Parwez E."/>
            <person name="Laue M.M."/>
            <person name="Kilimann M.W."/>
        </authorList>
    </citation>
    <scope>SUBCELLULAR LOCATION</scope>
    <scope>TISSUE SPECIFICITY</scope>
</reference>
<reference key="3">
    <citation type="journal article" date="2012" name="Nat. Commun.">
        <title>Quantitative maps of protein phosphorylation sites across 14 different rat organs and tissues.</title>
        <authorList>
            <person name="Lundby A."/>
            <person name="Secher A."/>
            <person name="Lage K."/>
            <person name="Nordsborg N.B."/>
            <person name="Dmytriyev A."/>
            <person name="Lundby C."/>
            <person name="Olsen J.V."/>
        </authorList>
    </citation>
    <scope>PHOSPHORYLATION [LARGE SCALE ANALYSIS] AT SER-163</scope>
    <scope>IDENTIFICATION BY MASS SPECTROMETRY [LARGE SCALE ANALYSIS]</scope>
</reference>
<sequence length="551" mass="62419">MEEAELVKGRLQAITDKRKIQEEISQKRLKIEEEKLKHQHLKKKALREKWLLDGIGSGKEHDEMKKQNQQDQHQTQVLEQSILRLEKEIQDLEKAELQISANEEVILKKLKSIERTTEDIIRSVKVEKEEIPEESIEDIYANIPDLPSSYIPSRLRKERNEESDDEQNRKALYAMEIKVEKDLKTGESVVLSSIPLPSDDFKSTGIKVYEDRQKSVYAVSSNQNTAYNGTDGLAPVEVEDLLRQASERNSKSPTEYHEPVYANPFCRPMTPQRERVISPGPNSQERMVMMKANGLDHHESESVHGMTDGLSERRSNGLAHTSPTRPTPQPRSKVQQVEEMVHTQQKRMPSPWEESSIRQNEYEVSPRTELSPSRASPGKSGPQCSSPICQEEADVRYNIVHSLPPDVDDTEPVTMIFMGYQQADENEEEKKLLTGYDGVIHAELVVIDDEAEDDEGQAEKPSYHPVAPCSQVYQPAKPTPLPRKRSEVSPHENTNHKSPHKNSISLKEQEERLGSPARHSPLGVPGAGDGTEDPSLTALRIRMAKLGKKVI</sequence>
<feature type="chain" id="PRO_0000262531" description="Palmdelphin">
    <location>
        <begin position="1"/>
        <end position="551"/>
    </location>
</feature>
<feature type="region of interest" description="Disordered" evidence="5">
    <location>
        <begin position="247"/>
        <end position="267"/>
    </location>
</feature>
<feature type="region of interest" description="Disordered" evidence="5">
    <location>
        <begin position="298"/>
        <end position="387"/>
    </location>
</feature>
<feature type="region of interest" description="Disordered" evidence="5">
    <location>
        <begin position="452"/>
        <end position="536"/>
    </location>
</feature>
<feature type="coiled-coil region" evidence="4">
    <location>
        <begin position="12"/>
        <end position="106"/>
    </location>
</feature>
<feature type="compositionally biased region" description="Basic and acidic residues" evidence="5">
    <location>
        <begin position="247"/>
        <end position="258"/>
    </location>
</feature>
<feature type="compositionally biased region" description="Basic and acidic residues" evidence="5">
    <location>
        <begin position="484"/>
        <end position="495"/>
    </location>
</feature>
<feature type="modified residue" description="N-acetylmethionine" evidence="3">
    <location>
        <position position="1"/>
    </location>
</feature>
<feature type="modified residue" description="Phosphoserine" evidence="3">
    <location>
        <position position="135"/>
    </location>
</feature>
<feature type="modified residue" description="Phosphoserine" evidence="8">
    <location>
        <position position="163"/>
    </location>
</feature>
<feature type="modified residue" description="Phosphothreonine" evidence="2">
    <location>
        <position position="270"/>
    </location>
</feature>
<feature type="modified residue" description="Phosphoserine" evidence="3">
    <location>
        <position position="322"/>
    </location>
</feature>
<feature type="modified residue" description="Phosphoserine" evidence="2">
    <location>
        <position position="350"/>
    </location>
</feature>
<feature type="modified residue" description="Phosphoserine" evidence="2">
    <location>
        <position position="371"/>
    </location>
</feature>
<feature type="modified residue" description="Phosphoserine" evidence="2">
    <location>
        <position position="376"/>
    </location>
</feature>
<feature type="modified residue" description="Phosphoserine" evidence="3">
    <location>
        <position position="385"/>
    </location>
</feature>
<feature type="modified residue" description="Phosphoserine" evidence="2">
    <location>
        <position position="386"/>
    </location>
</feature>
<feature type="modified residue" description="Phosphoserine" evidence="3">
    <location>
        <position position="498"/>
    </location>
</feature>
<feature type="modified residue" description="Phosphoserine" evidence="3">
    <location>
        <position position="515"/>
    </location>
</feature>
<feature type="modified residue" description="Phosphoserine" evidence="3">
    <location>
        <position position="520"/>
    </location>
</feature>
<feature type="cross-link" description="Glycyl lysine isopeptide (Lys-Gly) (interchain with G-Cter in SUMO2)" evidence="3">
    <location>
        <position position="125"/>
    </location>
</feature>
<feature type="cross-link" description="Glycyl lysine isopeptide (Lys-Gly) (interchain with G-Cter in SUMO1); alternate" evidence="3">
    <location>
        <position position="178"/>
    </location>
</feature>
<feature type="cross-link" description="Glycyl lysine isopeptide (Lys-Gly) (interchain with G-Cter in SUMO2); alternate" evidence="3">
    <location>
        <position position="178"/>
    </location>
</feature>
<name>PALMD_RAT</name>
<evidence type="ECO:0000250" key="1"/>
<evidence type="ECO:0000250" key="2">
    <source>
        <dbReference type="UniProtKB" id="Q9JHU2"/>
    </source>
</evidence>
<evidence type="ECO:0000250" key="3">
    <source>
        <dbReference type="UniProtKB" id="Q9NP74"/>
    </source>
</evidence>
<evidence type="ECO:0000255" key="4"/>
<evidence type="ECO:0000256" key="5">
    <source>
        <dbReference type="SAM" id="MobiDB-lite"/>
    </source>
</evidence>
<evidence type="ECO:0000269" key="6">
    <source>
    </source>
</evidence>
<evidence type="ECO:0000305" key="7"/>
<evidence type="ECO:0007744" key="8">
    <source>
    </source>
</evidence>
<accession>Q4KM62</accession>
<comment type="subunit">
    <text evidence="1">Interacts with GLUL.</text>
</comment>
<comment type="subcellular location">
    <subcellularLocation>
        <location evidence="6">Cytoplasm</location>
    </subcellularLocation>
    <subcellularLocation>
        <location evidence="6">Cell projection</location>
        <location evidence="6">Dendrite</location>
    </subcellularLocation>
    <subcellularLocation>
        <location evidence="6">Cell projection</location>
        <location evidence="6">Dendritic spine</location>
    </subcellularLocation>
</comment>
<comment type="tissue specificity">
    <text evidence="6">Expressed in the brain and the spinal cord. Expressed in the anterior olfactory nucleus, the olfactory tubercle, the nucleus supraopticus, the nucleus of the lateral olfactory tract, the piriform cortex, the cortico-amygdaloid transition zone, the septofimbrial nucleus and the indusium griseum (at protein level).</text>
</comment>
<comment type="PTM">
    <text evidence="1">Phosphorylated.</text>
</comment>
<comment type="similarity">
    <text evidence="7">Belongs to the paralemmin family.</text>
</comment>
<protein>
    <recommendedName>
        <fullName>Palmdelphin</fullName>
    </recommendedName>
</protein>
<gene>
    <name type="primary">Palmd</name>
</gene>
<keyword id="KW-0007">Acetylation</keyword>
<keyword id="KW-0966">Cell projection</keyword>
<keyword id="KW-0175">Coiled coil</keyword>
<keyword id="KW-0963">Cytoplasm</keyword>
<keyword id="KW-1017">Isopeptide bond</keyword>
<keyword id="KW-0597">Phosphoprotein</keyword>
<keyword id="KW-1185">Reference proteome</keyword>
<keyword id="KW-0770">Synapse</keyword>
<keyword id="KW-0832">Ubl conjugation</keyword>